<organism>
    <name type="scientific">Klebsiella pneumoniae (strain 342)</name>
    <dbReference type="NCBI Taxonomy" id="507522"/>
    <lineage>
        <taxon>Bacteria</taxon>
        <taxon>Pseudomonadati</taxon>
        <taxon>Pseudomonadota</taxon>
        <taxon>Gammaproteobacteria</taxon>
        <taxon>Enterobacterales</taxon>
        <taxon>Enterobacteriaceae</taxon>
        <taxon>Klebsiella/Raoultella group</taxon>
        <taxon>Klebsiella</taxon>
        <taxon>Klebsiella pneumoniae complex</taxon>
    </lineage>
</organism>
<protein>
    <recommendedName>
        <fullName evidence="1">Small ribosomal subunit biogenesis GTPase RsgA</fullName>
        <ecNumber evidence="1">3.6.1.-</ecNumber>
    </recommendedName>
</protein>
<comment type="function">
    <text evidence="1">One of several proteins that assist in the late maturation steps of the functional core of the 30S ribosomal subunit. Helps release RbfA from mature subunits. May play a role in the assembly of ribosomal proteins into the subunit. Circularly permuted GTPase that catalyzes slow GTP hydrolysis, GTPase activity is stimulated by the 30S ribosomal subunit.</text>
</comment>
<comment type="cofactor">
    <cofactor evidence="1">
        <name>Zn(2+)</name>
        <dbReference type="ChEBI" id="CHEBI:29105"/>
    </cofactor>
    <text evidence="1">Binds 1 zinc ion per subunit.</text>
</comment>
<comment type="subunit">
    <text evidence="1">Monomer. Associates with 30S ribosomal subunit, binds 16S rRNA.</text>
</comment>
<comment type="subcellular location">
    <subcellularLocation>
        <location evidence="1">Cytoplasm</location>
    </subcellularLocation>
</comment>
<comment type="similarity">
    <text evidence="1">Belongs to the TRAFAC class YlqF/YawG GTPase family. RsgA subfamily.</text>
</comment>
<feature type="chain" id="PRO_1000188088" description="Small ribosomal subunit biogenesis GTPase RsgA">
    <location>
        <begin position="1"/>
        <end position="353"/>
    </location>
</feature>
<feature type="domain" description="CP-type G" evidence="2">
    <location>
        <begin position="104"/>
        <end position="274"/>
    </location>
</feature>
<feature type="region of interest" description="Disordered" evidence="3">
    <location>
        <begin position="1"/>
        <end position="25"/>
    </location>
</feature>
<feature type="compositionally biased region" description="Polar residues" evidence="3">
    <location>
        <begin position="1"/>
        <end position="17"/>
    </location>
</feature>
<feature type="binding site" evidence="1">
    <location>
        <begin position="160"/>
        <end position="163"/>
    </location>
    <ligand>
        <name>GTP</name>
        <dbReference type="ChEBI" id="CHEBI:37565"/>
    </ligand>
</feature>
<feature type="binding site" evidence="1">
    <location>
        <begin position="214"/>
        <end position="222"/>
    </location>
    <ligand>
        <name>GTP</name>
        <dbReference type="ChEBI" id="CHEBI:37565"/>
    </ligand>
</feature>
<feature type="binding site" evidence="1">
    <location>
        <position position="298"/>
    </location>
    <ligand>
        <name>Zn(2+)</name>
        <dbReference type="ChEBI" id="CHEBI:29105"/>
    </ligand>
</feature>
<feature type="binding site" evidence="1">
    <location>
        <position position="303"/>
    </location>
    <ligand>
        <name>Zn(2+)</name>
        <dbReference type="ChEBI" id="CHEBI:29105"/>
    </ligand>
</feature>
<feature type="binding site" evidence="1">
    <location>
        <position position="305"/>
    </location>
    <ligand>
        <name>Zn(2+)</name>
        <dbReference type="ChEBI" id="CHEBI:29105"/>
    </ligand>
</feature>
<feature type="binding site" evidence="1">
    <location>
        <position position="311"/>
    </location>
    <ligand>
        <name>Zn(2+)</name>
        <dbReference type="ChEBI" id="CHEBI:29105"/>
    </ligand>
</feature>
<evidence type="ECO:0000255" key="1">
    <source>
        <dbReference type="HAMAP-Rule" id="MF_01820"/>
    </source>
</evidence>
<evidence type="ECO:0000255" key="2">
    <source>
        <dbReference type="PROSITE-ProRule" id="PRU01058"/>
    </source>
</evidence>
<evidence type="ECO:0000256" key="3">
    <source>
        <dbReference type="SAM" id="MobiDB-lite"/>
    </source>
</evidence>
<reference key="1">
    <citation type="journal article" date="2008" name="PLoS Genet.">
        <title>Complete genome sequence of the N2-fixing broad host range endophyte Klebsiella pneumoniae 342 and virulence predictions verified in mice.</title>
        <authorList>
            <person name="Fouts D.E."/>
            <person name="Tyler H.L."/>
            <person name="DeBoy R.T."/>
            <person name="Daugherty S."/>
            <person name="Ren Q."/>
            <person name="Badger J.H."/>
            <person name="Durkin A.S."/>
            <person name="Huot H."/>
            <person name="Shrivastava S."/>
            <person name="Kothari S."/>
            <person name="Dodson R.J."/>
            <person name="Mohamoud Y."/>
            <person name="Khouri H."/>
            <person name="Roesch L.F.W."/>
            <person name="Krogfelt K.A."/>
            <person name="Struve C."/>
            <person name="Triplett E.W."/>
            <person name="Methe B.A."/>
        </authorList>
    </citation>
    <scope>NUCLEOTIDE SEQUENCE [LARGE SCALE GENOMIC DNA]</scope>
    <source>
        <strain>342</strain>
    </source>
</reference>
<dbReference type="EC" id="3.6.1.-" evidence="1"/>
<dbReference type="EMBL" id="CP000964">
    <property type="protein sequence ID" value="ACI09796.1"/>
    <property type="molecule type" value="Genomic_DNA"/>
</dbReference>
<dbReference type="SMR" id="B5Y341"/>
<dbReference type="KEGG" id="kpe:KPK_5110"/>
<dbReference type="HOGENOM" id="CLU_033617_2_0_6"/>
<dbReference type="Proteomes" id="UP000001734">
    <property type="component" value="Chromosome"/>
</dbReference>
<dbReference type="GO" id="GO:0005737">
    <property type="term" value="C:cytoplasm"/>
    <property type="evidence" value="ECO:0007669"/>
    <property type="project" value="UniProtKB-SubCell"/>
</dbReference>
<dbReference type="GO" id="GO:0005525">
    <property type="term" value="F:GTP binding"/>
    <property type="evidence" value="ECO:0007669"/>
    <property type="project" value="UniProtKB-UniRule"/>
</dbReference>
<dbReference type="GO" id="GO:0003924">
    <property type="term" value="F:GTPase activity"/>
    <property type="evidence" value="ECO:0007669"/>
    <property type="project" value="UniProtKB-UniRule"/>
</dbReference>
<dbReference type="GO" id="GO:0046872">
    <property type="term" value="F:metal ion binding"/>
    <property type="evidence" value="ECO:0007669"/>
    <property type="project" value="UniProtKB-KW"/>
</dbReference>
<dbReference type="GO" id="GO:0019843">
    <property type="term" value="F:rRNA binding"/>
    <property type="evidence" value="ECO:0007669"/>
    <property type="project" value="UniProtKB-KW"/>
</dbReference>
<dbReference type="GO" id="GO:0042274">
    <property type="term" value="P:ribosomal small subunit biogenesis"/>
    <property type="evidence" value="ECO:0007669"/>
    <property type="project" value="UniProtKB-UniRule"/>
</dbReference>
<dbReference type="CDD" id="cd01854">
    <property type="entry name" value="YjeQ_EngC"/>
    <property type="match status" value="1"/>
</dbReference>
<dbReference type="FunFam" id="3.40.50.300:FF:000389">
    <property type="entry name" value="Small ribosomal subunit biogenesis GTPase RsgA"/>
    <property type="match status" value="1"/>
</dbReference>
<dbReference type="Gene3D" id="2.40.50.140">
    <property type="entry name" value="Nucleic acid-binding proteins"/>
    <property type="match status" value="1"/>
</dbReference>
<dbReference type="Gene3D" id="3.40.50.300">
    <property type="entry name" value="P-loop containing nucleotide triphosphate hydrolases"/>
    <property type="match status" value="1"/>
</dbReference>
<dbReference type="Gene3D" id="1.10.40.50">
    <property type="entry name" value="Probable gtpase engc, domain 3"/>
    <property type="match status" value="1"/>
</dbReference>
<dbReference type="HAMAP" id="MF_01820">
    <property type="entry name" value="GTPase_RsgA"/>
    <property type="match status" value="1"/>
</dbReference>
<dbReference type="InterPro" id="IPR030378">
    <property type="entry name" value="G_CP_dom"/>
</dbReference>
<dbReference type="InterPro" id="IPR012340">
    <property type="entry name" value="NA-bd_OB-fold"/>
</dbReference>
<dbReference type="InterPro" id="IPR027417">
    <property type="entry name" value="P-loop_NTPase"/>
</dbReference>
<dbReference type="InterPro" id="IPR004881">
    <property type="entry name" value="Ribosome_biogen_GTPase_RsgA"/>
</dbReference>
<dbReference type="InterPro" id="IPR010914">
    <property type="entry name" value="RsgA_GTPase_dom"/>
</dbReference>
<dbReference type="NCBIfam" id="NF008931">
    <property type="entry name" value="PRK12288.1"/>
    <property type="match status" value="1"/>
</dbReference>
<dbReference type="NCBIfam" id="TIGR00157">
    <property type="entry name" value="ribosome small subunit-dependent GTPase A"/>
    <property type="match status" value="1"/>
</dbReference>
<dbReference type="PANTHER" id="PTHR32120">
    <property type="entry name" value="SMALL RIBOSOMAL SUBUNIT BIOGENESIS GTPASE RSGA"/>
    <property type="match status" value="1"/>
</dbReference>
<dbReference type="PANTHER" id="PTHR32120:SF11">
    <property type="entry name" value="SMALL RIBOSOMAL SUBUNIT BIOGENESIS GTPASE RSGA 1, MITOCHONDRIAL-RELATED"/>
    <property type="match status" value="1"/>
</dbReference>
<dbReference type="Pfam" id="PF03193">
    <property type="entry name" value="RsgA_GTPase"/>
    <property type="match status" value="1"/>
</dbReference>
<dbReference type="SUPFAM" id="SSF52540">
    <property type="entry name" value="P-loop containing nucleoside triphosphate hydrolases"/>
    <property type="match status" value="1"/>
</dbReference>
<dbReference type="PROSITE" id="PS50936">
    <property type="entry name" value="ENGC_GTPASE"/>
    <property type="match status" value="1"/>
</dbReference>
<dbReference type="PROSITE" id="PS51721">
    <property type="entry name" value="G_CP"/>
    <property type="match status" value="1"/>
</dbReference>
<proteinExistence type="inferred from homology"/>
<sequence length="353" mass="39382">MSKNKLSKGQQRRVNANHQRRLKTTAEKADYDDNLFGETSEGIVISRFGMHADVESADGSVHRCNIRRTIRSLVTGDRVVWRPGKDAADGVNVKGIVEAVHERASVLTRPDFYDGVKPIAANIDQIVVVSAILPELSLNIIDRYLVACEAQDIEPLIVLNKIDLLDDDGLRFVNEQMDIYRNIGYRVLMVSSRTQDGLKPLEAALTDRISIFAGQSGVGKSSLLNALLGLNEDQILTNDVSDVSGLGQHTTTAARLYHFPHGGDVIDSPGVREFGLWHLEAEQITHGFVEFHDYLGHCKYRDCKHDNDPGCALREAVENGKIAESRFENYHRILESMEQVQVKTRKNFSSSDD</sequence>
<gene>
    <name evidence="1" type="primary">rsgA</name>
    <name type="ordered locus">KPK_5110</name>
</gene>
<keyword id="KW-0963">Cytoplasm</keyword>
<keyword id="KW-0342">GTP-binding</keyword>
<keyword id="KW-0378">Hydrolase</keyword>
<keyword id="KW-0479">Metal-binding</keyword>
<keyword id="KW-0547">Nucleotide-binding</keyword>
<keyword id="KW-0690">Ribosome biogenesis</keyword>
<keyword id="KW-0694">RNA-binding</keyword>
<keyword id="KW-0699">rRNA-binding</keyword>
<keyword id="KW-0862">Zinc</keyword>
<name>RSGA_KLEP3</name>
<accession>B5Y341</accession>